<proteinExistence type="inferred from homology"/>
<comment type="function">
    <text evidence="1">Catalyzes the anti-1,4-elimination of the C-3 phosphate and the C-6 proR hydrogen from 5-enolpyruvylshikimate-3-phosphate (EPSP) to yield chorismate, which is the branch point compound that serves as the starting substrate for the three terminal pathways of aromatic amino acid biosynthesis. This reaction introduces a second double bond into the aromatic ring system.</text>
</comment>
<comment type="catalytic activity">
    <reaction evidence="1">
        <text>5-O-(1-carboxyvinyl)-3-phosphoshikimate = chorismate + phosphate</text>
        <dbReference type="Rhea" id="RHEA:21020"/>
        <dbReference type="ChEBI" id="CHEBI:29748"/>
        <dbReference type="ChEBI" id="CHEBI:43474"/>
        <dbReference type="ChEBI" id="CHEBI:57701"/>
        <dbReference type="EC" id="4.2.3.5"/>
    </reaction>
</comment>
<comment type="cofactor">
    <cofactor evidence="1">
        <name>FMNH2</name>
        <dbReference type="ChEBI" id="CHEBI:57618"/>
    </cofactor>
    <text evidence="1">Reduced FMN (FMNH(2)).</text>
</comment>
<comment type="pathway">
    <text evidence="1">Metabolic intermediate biosynthesis; chorismate biosynthesis; chorismate from D-erythrose 4-phosphate and phosphoenolpyruvate: step 7/7.</text>
</comment>
<comment type="subunit">
    <text evidence="1">Homotetramer.</text>
</comment>
<comment type="similarity">
    <text evidence="1">Belongs to the chorismate synthase family.</text>
</comment>
<protein>
    <recommendedName>
        <fullName evidence="1">Chorismate synthase</fullName>
        <shortName evidence="1">CS</shortName>
        <ecNumber evidence="1">4.2.3.5</ecNumber>
    </recommendedName>
    <alternativeName>
        <fullName evidence="1">5-enolpyruvylshikimate-3-phosphate phospholyase</fullName>
    </alternativeName>
</protein>
<dbReference type="EC" id="4.2.3.5" evidence="1"/>
<dbReference type="EMBL" id="CP000612">
    <property type="protein sequence ID" value="ABO49554.1"/>
    <property type="molecule type" value="Genomic_DNA"/>
</dbReference>
<dbReference type="RefSeq" id="WP_011877381.1">
    <property type="nucleotide sequence ID" value="NC_009253.1"/>
</dbReference>
<dbReference type="SMR" id="A4J3A1"/>
<dbReference type="STRING" id="349161.Dred_1019"/>
<dbReference type="KEGG" id="drm:Dred_1019"/>
<dbReference type="eggNOG" id="COG0082">
    <property type="taxonomic scope" value="Bacteria"/>
</dbReference>
<dbReference type="HOGENOM" id="CLU_034547_2_0_9"/>
<dbReference type="OrthoDB" id="9771806at2"/>
<dbReference type="UniPathway" id="UPA00053">
    <property type="reaction ID" value="UER00090"/>
</dbReference>
<dbReference type="Proteomes" id="UP000001556">
    <property type="component" value="Chromosome"/>
</dbReference>
<dbReference type="GO" id="GO:0005829">
    <property type="term" value="C:cytosol"/>
    <property type="evidence" value="ECO:0007669"/>
    <property type="project" value="TreeGrafter"/>
</dbReference>
<dbReference type="GO" id="GO:0004107">
    <property type="term" value="F:chorismate synthase activity"/>
    <property type="evidence" value="ECO:0007669"/>
    <property type="project" value="UniProtKB-UniRule"/>
</dbReference>
<dbReference type="GO" id="GO:0010181">
    <property type="term" value="F:FMN binding"/>
    <property type="evidence" value="ECO:0007669"/>
    <property type="project" value="TreeGrafter"/>
</dbReference>
<dbReference type="GO" id="GO:0008652">
    <property type="term" value="P:amino acid biosynthetic process"/>
    <property type="evidence" value="ECO:0007669"/>
    <property type="project" value="UniProtKB-KW"/>
</dbReference>
<dbReference type="GO" id="GO:0009073">
    <property type="term" value="P:aromatic amino acid family biosynthetic process"/>
    <property type="evidence" value="ECO:0007669"/>
    <property type="project" value="UniProtKB-KW"/>
</dbReference>
<dbReference type="GO" id="GO:0009423">
    <property type="term" value="P:chorismate biosynthetic process"/>
    <property type="evidence" value="ECO:0007669"/>
    <property type="project" value="UniProtKB-UniRule"/>
</dbReference>
<dbReference type="CDD" id="cd07304">
    <property type="entry name" value="Chorismate_synthase"/>
    <property type="match status" value="1"/>
</dbReference>
<dbReference type="FunFam" id="3.60.150.10:FF:000002">
    <property type="entry name" value="Chorismate synthase"/>
    <property type="match status" value="1"/>
</dbReference>
<dbReference type="Gene3D" id="3.60.150.10">
    <property type="entry name" value="Chorismate synthase AroC"/>
    <property type="match status" value="1"/>
</dbReference>
<dbReference type="HAMAP" id="MF_00300">
    <property type="entry name" value="Chorismate_synth"/>
    <property type="match status" value="1"/>
</dbReference>
<dbReference type="InterPro" id="IPR000453">
    <property type="entry name" value="Chorismate_synth"/>
</dbReference>
<dbReference type="InterPro" id="IPR035904">
    <property type="entry name" value="Chorismate_synth_AroC_sf"/>
</dbReference>
<dbReference type="InterPro" id="IPR020541">
    <property type="entry name" value="Chorismate_synthase_CS"/>
</dbReference>
<dbReference type="NCBIfam" id="TIGR00033">
    <property type="entry name" value="aroC"/>
    <property type="match status" value="1"/>
</dbReference>
<dbReference type="NCBIfam" id="NF003793">
    <property type="entry name" value="PRK05382.1"/>
    <property type="match status" value="1"/>
</dbReference>
<dbReference type="PANTHER" id="PTHR21085">
    <property type="entry name" value="CHORISMATE SYNTHASE"/>
    <property type="match status" value="1"/>
</dbReference>
<dbReference type="PANTHER" id="PTHR21085:SF0">
    <property type="entry name" value="CHORISMATE SYNTHASE"/>
    <property type="match status" value="1"/>
</dbReference>
<dbReference type="Pfam" id="PF01264">
    <property type="entry name" value="Chorismate_synt"/>
    <property type="match status" value="1"/>
</dbReference>
<dbReference type="PIRSF" id="PIRSF001456">
    <property type="entry name" value="Chorismate_synth"/>
    <property type="match status" value="1"/>
</dbReference>
<dbReference type="SUPFAM" id="SSF103263">
    <property type="entry name" value="Chorismate synthase, AroC"/>
    <property type="match status" value="1"/>
</dbReference>
<dbReference type="PROSITE" id="PS00787">
    <property type="entry name" value="CHORISMATE_SYNTHASE_1"/>
    <property type="match status" value="1"/>
</dbReference>
<dbReference type="PROSITE" id="PS00788">
    <property type="entry name" value="CHORISMATE_SYNTHASE_2"/>
    <property type="match status" value="1"/>
</dbReference>
<dbReference type="PROSITE" id="PS00789">
    <property type="entry name" value="CHORISMATE_SYNTHASE_3"/>
    <property type="match status" value="1"/>
</dbReference>
<sequence>MLRFLTAGESHGPALTAIVEGMVAGLPVTHEYINTQLARRQGGYGRGGRMKIEKDEVQFLSGIRGGYTTGSPITLQIANRDWQNWCHIMASGPDALLDERVVTRPRPGHADLPGAIKYDHSDIRNILERSSARETAARVAVGSMARCLLEELDIKLVGFVCSIGSIKASVAENLSIEDLVARTQSSQLFCPDEQAEEAMVKEIDQAKETGDSLGGVFEVRVYGVPVGLGSHVQWDRKLDSRLAGAMMGIQAIKGVEIGLGFGAAAVPGSQVHDEIYYAAQRGFYRGSNRAGGIEGGITNGEPLILRAAMKPIPTLYKPLRSVDIKNKEPYLASVERSDVCAVPAACVVGEAVVAWELAVALMEKFGGDSLGEIKARLNQWQQWVRQV</sequence>
<accession>A4J3A1</accession>
<name>AROC_DESRM</name>
<gene>
    <name evidence="1" type="primary">aroC</name>
    <name type="ordered locus">Dred_1019</name>
</gene>
<organism>
    <name type="scientific">Desulforamulus reducens (strain ATCC BAA-1160 / DSM 100696 / MI-1)</name>
    <name type="common">Desulfotomaculum reducens</name>
    <dbReference type="NCBI Taxonomy" id="349161"/>
    <lineage>
        <taxon>Bacteria</taxon>
        <taxon>Bacillati</taxon>
        <taxon>Bacillota</taxon>
        <taxon>Clostridia</taxon>
        <taxon>Eubacteriales</taxon>
        <taxon>Peptococcaceae</taxon>
        <taxon>Desulforamulus</taxon>
    </lineage>
</organism>
<keyword id="KW-0028">Amino-acid biosynthesis</keyword>
<keyword id="KW-0057">Aromatic amino acid biosynthesis</keyword>
<keyword id="KW-0274">FAD</keyword>
<keyword id="KW-0285">Flavoprotein</keyword>
<keyword id="KW-0288">FMN</keyword>
<keyword id="KW-0456">Lyase</keyword>
<keyword id="KW-0521">NADP</keyword>
<keyword id="KW-1185">Reference proteome</keyword>
<reference key="1">
    <citation type="submission" date="2007-03" db="EMBL/GenBank/DDBJ databases">
        <title>Complete sequence of Desulfotomaculum reducens MI-1.</title>
        <authorList>
            <consortium name="US DOE Joint Genome Institute"/>
            <person name="Copeland A."/>
            <person name="Lucas S."/>
            <person name="Lapidus A."/>
            <person name="Barry K."/>
            <person name="Detter J.C."/>
            <person name="Glavina del Rio T."/>
            <person name="Hammon N."/>
            <person name="Israni S."/>
            <person name="Dalin E."/>
            <person name="Tice H."/>
            <person name="Pitluck S."/>
            <person name="Sims D."/>
            <person name="Brettin T."/>
            <person name="Bruce D."/>
            <person name="Han C."/>
            <person name="Tapia R."/>
            <person name="Schmutz J."/>
            <person name="Larimer F."/>
            <person name="Land M."/>
            <person name="Hauser L."/>
            <person name="Kyrpides N."/>
            <person name="Kim E."/>
            <person name="Tebo B.M."/>
            <person name="Richardson P."/>
        </authorList>
    </citation>
    <scope>NUCLEOTIDE SEQUENCE [LARGE SCALE GENOMIC DNA]</scope>
    <source>
        <strain>ATCC BAA-1160 / DSM 100696 / MI-1</strain>
    </source>
</reference>
<evidence type="ECO:0000255" key="1">
    <source>
        <dbReference type="HAMAP-Rule" id="MF_00300"/>
    </source>
</evidence>
<feature type="chain" id="PRO_1000071970" description="Chorismate synthase">
    <location>
        <begin position="1"/>
        <end position="387"/>
    </location>
</feature>
<feature type="binding site" evidence="1">
    <location>
        <position position="40"/>
    </location>
    <ligand>
        <name>NADP(+)</name>
        <dbReference type="ChEBI" id="CHEBI:58349"/>
    </ligand>
</feature>
<feature type="binding site" evidence="1">
    <location>
        <position position="46"/>
    </location>
    <ligand>
        <name>NADP(+)</name>
        <dbReference type="ChEBI" id="CHEBI:58349"/>
    </ligand>
</feature>
<feature type="binding site" evidence="1">
    <location>
        <begin position="129"/>
        <end position="131"/>
    </location>
    <ligand>
        <name>FMN</name>
        <dbReference type="ChEBI" id="CHEBI:58210"/>
    </ligand>
</feature>
<feature type="binding site" evidence="1">
    <location>
        <begin position="250"/>
        <end position="251"/>
    </location>
    <ligand>
        <name>FMN</name>
        <dbReference type="ChEBI" id="CHEBI:58210"/>
    </ligand>
</feature>
<feature type="binding site" evidence="1">
    <location>
        <position position="295"/>
    </location>
    <ligand>
        <name>FMN</name>
        <dbReference type="ChEBI" id="CHEBI:58210"/>
    </ligand>
</feature>
<feature type="binding site" evidence="1">
    <location>
        <begin position="310"/>
        <end position="314"/>
    </location>
    <ligand>
        <name>FMN</name>
        <dbReference type="ChEBI" id="CHEBI:58210"/>
    </ligand>
</feature>
<feature type="binding site" evidence="1">
    <location>
        <position position="336"/>
    </location>
    <ligand>
        <name>FMN</name>
        <dbReference type="ChEBI" id="CHEBI:58210"/>
    </ligand>
</feature>